<geneLocation type="mitochondrion"/>
<gene>
    <name type="primary">ND4L</name>
</gene>
<keyword id="KW-0249">Electron transport</keyword>
<keyword id="KW-0472">Membrane</keyword>
<keyword id="KW-0496">Mitochondrion</keyword>
<keyword id="KW-0520">NAD</keyword>
<keyword id="KW-0679">Respiratory chain</keyword>
<keyword id="KW-1278">Translocase</keyword>
<keyword id="KW-0812">Transmembrane</keyword>
<keyword id="KW-1133">Transmembrane helix</keyword>
<keyword id="KW-0813">Transport</keyword>
<keyword id="KW-0830">Ubiquinone</keyword>
<dbReference type="EC" id="7.1.1.2"/>
<dbReference type="EMBL" id="U24570">
    <property type="protein sequence ID" value="AAC46872.1"/>
    <property type="molecule type" value="Genomic_DNA"/>
</dbReference>
<dbReference type="PIR" id="S58993">
    <property type="entry name" value="S58993"/>
</dbReference>
<dbReference type="RefSeq" id="NP_008246.1">
    <property type="nucleotide sequence ID" value="NC_001673.1"/>
</dbReference>
<dbReference type="SMR" id="Q34948"/>
<dbReference type="GeneID" id="807916"/>
<dbReference type="CTD" id="4539"/>
<dbReference type="GO" id="GO:0031966">
    <property type="term" value="C:mitochondrial membrane"/>
    <property type="evidence" value="ECO:0007669"/>
    <property type="project" value="UniProtKB-SubCell"/>
</dbReference>
<dbReference type="GO" id="GO:0008137">
    <property type="term" value="F:NADH dehydrogenase (ubiquinone) activity"/>
    <property type="evidence" value="ECO:0007669"/>
    <property type="project" value="UniProtKB-EC"/>
</dbReference>
<dbReference type="Gene3D" id="1.10.287.3510">
    <property type="match status" value="1"/>
</dbReference>
<dbReference type="InterPro" id="IPR039428">
    <property type="entry name" value="NUOK/Mnh_C1-like"/>
</dbReference>
<dbReference type="Pfam" id="PF00420">
    <property type="entry name" value="Oxidored_q2"/>
    <property type="match status" value="1"/>
</dbReference>
<accession>Q34948</accession>
<sequence>MYSSIMSLVFLLPIVAVVNLISNQSHFLMTLLSLEGITLSLVLFVPISLSIMSASNVSISVILLTFGACEASLGLSLMVLMSRSYGTDMLNSLTANKC</sequence>
<name>NU4LM_LUMTE</name>
<comment type="function">
    <text evidence="1">Core subunit of the mitochondrial membrane respiratory chain NADH dehydrogenase (Complex I) that is believed to belong to the minimal assembly required for catalysis. Complex I functions in the transfer of electrons from NADH to the respiratory chain. The immediate electron acceptor for the enzyme is believed to be ubiquinone (By similarity).</text>
</comment>
<comment type="catalytic activity">
    <reaction>
        <text>a ubiquinone + NADH + 5 H(+)(in) = a ubiquinol + NAD(+) + 4 H(+)(out)</text>
        <dbReference type="Rhea" id="RHEA:29091"/>
        <dbReference type="Rhea" id="RHEA-COMP:9565"/>
        <dbReference type="Rhea" id="RHEA-COMP:9566"/>
        <dbReference type="ChEBI" id="CHEBI:15378"/>
        <dbReference type="ChEBI" id="CHEBI:16389"/>
        <dbReference type="ChEBI" id="CHEBI:17976"/>
        <dbReference type="ChEBI" id="CHEBI:57540"/>
        <dbReference type="ChEBI" id="CHEBI:57945"/>
        <dbReference type="EC" id="7.1.1.2"/>
    </reaction>
</comment>
<comment type="subcellular location">
    <subcellularLocation>
        <location evidence="1">Mitochondrion membrane</location>
        <topology evidence="1">Multi-pass membrane protein</topology>
    </subcellularLocation>
</comment>
<comment type="similarity">
    <text evidence="3">Belongs to the complex I subunit 4L family.</text>
</comment>
<proteinExistence type="inferred from homology"/>
<feature type="chain" id="PRO_0000118438" description="NADH-ubiquinone oxidoreductase chain 4L">
    <location>
        <begin position="1"/>
        <end position="98"/>
    </location>
</feature>
<feature type="transmembrane region" description="Helical" evidence="2">
    <location>
        <begin position="1"/>
        <end position="21"/>
    </location>
</feature>
<feature type="transmembrane region" description="Helical" evidence="2">
    <location>
        <begin position="27"/>
        <end position="47"/>
    </location>
</feature>
<feature type="transmembrane region" description="Helical" evidence="2">
    <location>
        <begin position="61"/>
        <end position="81"/>
    </location>
</feature>
<organism>
    <name type="scientific">Lumbricus terrestris</name>
    <name type="common">Common earthworm</name>
    <dbReference type="NCBI Taxonomy" id="6398"/>
    <lineage>
        <taxon>Eukaryota</taxon>
        <taxon>Metazoa</taxon>
        <taxon>Spiralia</taxon>
        <taxon>Lophotrochozoa</taxon>
        <taxon>Annelida</taxon>
        <taxon>Clitellata</taxon>
        <taxon>Oligochaeta</taxon>
        <taxon>Crassiclitellata</taxon>
        <taxon>Lumbricina</taxon>
        <taxon>Lumbricidae</taxon>
        <taxon>Lumbricinae</taxon>
        <taxon>Lumbricus</taxon>
    </lineage>
</organism>
<protein>
    <recommendedName>
        <fullName>NADH-ubiquinone oxidoreductase chain 4L</fullName>
        <ecNumber>7.1.1.2</ecNumber>
    </recommendedName>
    <alternativeName>
        <fullName>NADH dehydrogenase subunit 4L</fullName>
    </alternativeName>
</protein>
<evidence type="ECO:0000250" key="1"/>
<evidence type="ECO:0000255" key="2"/>
<evidence type="ECO:0000305" key="3"/>
<reference key="1">
    <citation type="journal article" date="1995" name="Genetics">
        <title>Complete sequence of the mitochondrial DNA of the annelid worm Lumbricus terrestris.</title>
        <authorList>
            <person name="Boore J.L."/>
            <person name="Brown W.M."/>
        </authorList>
    </citation>
    <scope>NUCLEOTIDE SEQUENCE [GENOMIC DNA]</scope>
</reference>